<feature type="chain" id="PRO_0000053983" description="Potassium voltage-gated channel subfamily A member 4">
    <location>
        <begin position="1"/>
        <end position="654"/>
    </location>
</feature>
<feature type="topological domain" description="Cytoplasmic" evidence="3">
    <location>
        <begin position="1"/>
        <end position="305"/>
    </location>
</feature>
<feature type="transmembrane region" description="Helical; Name=Segment S1" evidence="3">
    <location>
        <begin position="306"/>
        <end position="327"/>
    </location>
</feature>
<feature type="topological domain" description="Extracellular" evidence="3">
    <location>
        <begin position="328"/>
        <end position="371"/>
    </location>
</feature>
<feature type="transmembrane region" description="Helical; Name=Segment S2" evidence="3">
    <location>
        <begin position="372"/>
        <end position="393"/>
    </location>
</feature>
<feature type="topological domain" description="Cytoplasmic" evidence="3">
    <location>
        <begin position="394"/>
        <end position="404"/>
    </location>
</feature>
<feature type="transmembrane region" description="Helical; Name=Segment S3" evidence="3">
    <location>
        <begin position="405"/>
        <end position="425"/>
    </location>
</feature>
<feature type="topological domain" description="Extracellular" evidence="3">
    <location>
        <begin position="426"/>
        <end position="440"/>
    </location>
</feature>
<feature type="transmembrane region" description="Helical; Voltage-sensor; Name=Segment S4" evidence="3">
    <location>
        <begin position="441"/>
        <end position="461"/>
    </location>
</feature>
<feature type="topological domain" description="Cytoplasmic" evidence="3">
    <location>
        <begin position="462"/>
        <end position="476"/>
    </location>
</feature>
<feature type="transmembrane region" description="Helical; Name=Segment S5" evidence="3">
    <location>
        <begin position="477"/>
        <end position="498"/>
    </location>
</feature>
<feature type="topological domain" description="Extracellular" evidence="3">
    <location>
        <begin position="499"/>
        <end position="512"/>
    </location>
</feature>
<feature type="intramembrane region" description="Helical; Name=Pore helix" evidence="3">
    <location>
        <begin position="513"/>
        <end position="524"/>
    </location>
</feature>
<feature type="intramembrane region" evidence="3">
    <location>
        <begin position="525"/>
        <end position="532"/>
    </location>
</feature>
<feature type="topological domain" description="Extracellular" evidence="3">
    <location>
        <begin position="533"/>
        <end position="539"/>
    </location>
</feature>
<feature type="transmembrane region" description="Helical; Name=Segment S6" evidence="3">
    <location>
        <begin position="540"/>
        <end position="568"/>
    </location>
</feature>
<feature type="topological domain" description="Cytoplasmic" evidence="3">
    <location>
        <begin position="569"/>
        <end position="654"/>
    </location>
</feature>
<feature type="region of interest" description="Disordered" evidence="6">
    <location>
        <begin position="39"/>
        <end position="146"/>
    </location>
</feature>
<feature type="region of interest" description="S4-S5 linker" evidence="3">
    <location>
        <begin position="463"/>
        <end position="476"/>
    </location>
</feature>
<feature type="region of interest" description="Disordered" evidence="6">
    <location>
        <begin position="630"/>
        <end position="654"/>
    </location>
</feature>
<feature type="short sequence motif" description="Selectivity filter" evidence="3">
    <location>
        <begin position="525"/>
        <end position="530"/>
    </location>
</feature>
<feature type="short sequence motif" description="PDZ-binding" evidence="1">
    <location>
        <begin position="652"/>
        <end position="654"/>
    </location>
</feature>
<feature type="compositionally biased region" description="Low complexity" evidence="6">
    <location>
        <begin position="39"/>
        <end position="52"/>
    </location>
</feature>
<feature type="compositionally biased region" description="Basic residues" evidence="6">
    <location>
        <begin position="81"/>
        <end position="99"/>
    </location>
</feature>
<feature type="compositionally biased region" description="Acidic residues" evidence="6">
    <location>
        <begin position="122"/>
        <end position="137"/>
    </location>
</feature>
<feature type="compositionally biased region" description="Basic and acidic residues" evidence="6">
    <location>
        <begin position="630"/>
        <end position="641"/>
    </location>
</feature>
<feature type="modified residue" description="Phosphoserine" evidence="4">
    <location>
        <position position="122"/>
    </location>
</feature>
<feature type="modified residue" description="Phosphoserine; by PKA" evidence="5">
    <location>
        <position position="600"/>
    </location>
</feature>
<feature type="glycosylation site" description="N-linked (GlcNAc...) asparagine" evidence="5">
    <location>
        <position position="353"/>
    </location>
</feature>
<reference key="1">
    <citation type="journal article" date="1994" name="Am. J. Physiol.">
        <title>Cloning and characterization of an Ito-like potassium channel from ferret ventricle.</title>
        <authorList>
            <person name="Comer M.B."/>
            <person name="Campbell D.L."/>
            <person name="Rasmusson R.L."/>
            <person name="Lamson D.R."/>
            <person name="Morales M.J."/>
            <person name="Zhang Y."/>
            <person name="Strauss H.C."/>
        </authorList>
    </citation>
    <scope>NUCLEOTIDE SEQUENCE [MRNA]</scope>
    <scope>FUNCTION</scope>
    <scope>SUBCELLULAR LOCATION</scope>
    <scope>DOMAIN</scope>
    <scope>TRANSPORTER ACTIVITY</scope>
    <source>
        <tissue>Heart ventricle</tissue>
    </source>
</reference>
<dbReference type="EMBL" id="U06156">
    <property type="protein sequence ID" value="AAB60261.1"/>
    <property type="molecule type" value="mRNA"/>
</dbReference>
<dbReference type="RefSeq" id="XP_004755955.1">
    <property type="nucleotide sequence ID" value="XM_004755898.3"/>
</dbReference>
<dbReference type="BMRB" id="Q28527"/>
<dbReference type="SMR" id="Q28527"/>
<dbReference type="STRING" id="9669.ENSMPUP00000019828"/>
<dbReference type="GlyCosmos" id="Q28527">
    <property type="glycosylation" value="1 site, No reported glycans"/>
</dbReference>
<dbReference type="GeneID" id="101689037"/>
<dbReference type="KEGG" id="mpuf:101689037"/>
<dbReference type="CTD" id="3739"/>
<dbReference type="eggNOG" id="KOG1545">
    <property type="taxonomic scope" value="Eukaryota"/>
</dbReference>
<dbReference type="HOGENOM" id="CLU_011722_4_0_1"/>
<dbReference type="InParanoid" id="Q28527"/>
<dbReference type="OMA" id="DHGDECS"/>
<dbReference type="OrthoDB" id="415460at2759"/>
<dbReference type="Proteomes" id="UP000000715">
    <property type="component" value="Unplaced"/>
</dbReference>
<dbReference type="GO" id="GO:0030424">
    <property type="term" value="C:axon"/>
    <property type="evidence" value="ECO:0000250"/>
    <property type="project" value="UniProtKB"/>
</dbReference>
<dbReference type="GO" id="GO:0043194">
    <property type="term" value="C:axon initial segment"/>
    <property type="evidence" value="ECO:0007669"/>
    <property type="project" value="Ensembl"/>
</dbReference>
<dbReference type="GO" id="GO:0043197">
    <property type="term" value="C:dendritic spine"/>
    <property type="evidence" value="ECO:0007669"/>
    <property type="project" value="TreeGrafter"/>
</dbReference>
<dbReference type="GO" id="GO:0016020">
    <property type="term" value="C:membrane"/>
    <property type="evidence" value="ECO:0000250"/>
    <property type="project" value="UniProtKB"/>
</dbReference>
<dbReference type="GO" id="GO:0005886">
    <property type="term" value="C:plasma membrane"/>
    <property type="evidence" value="ECO:0000250"/>
    <property type="project" value="UniProtKB"/>
</dbReference>
<dbReference type="GO" id="GO:0008076">
    <property type="term" value="C:voltage-gated potassium channel complex"/>
    <property type="evidence" value="ECO:0000250"/>
    <property type="project" value="UniProtKB"/>
</dbReference>
<dbReference type="GO" id="GO:0005251">
    <property type="term" value="F:delayed rectifier potassium channel activity"/>
    <property type="evidence" value="ECO:0007669"/>
    <property type="project" value="TreeGrafter"/>
</dbReference>
<dbReference type="GO" id="GO:0030955">
    <property type="term" value="F:potassium ion binding"/>
    <property type="evidence" value="ECO:0007669"/>
    <property type="project" value="InterPro"/>
</dbReference>
<dbReference type="GO" id="GO:0099508">
    <property type="term" value="F:voltage-gated monoatomic ion channel activity involved in regulation of presynaptic membrane potential"/>
    <property type="evidence" value="ECO:0007669"/>
    <property type="project" value="Ensembl"/>
</dbReference>
<dbReference type="GO" id="GO:0005249">
    <property type="term" value="F:voltage-gated potassium channel activity"/>
    <property type="evidence" value="ECO:0000314"/>
    <property type="project" value="UniProtKB"/>
</dbReference>
<dbReference type="GO" id="GO:0001508">
    <property type="term" value="P:action potential"/>
    <property type="evidence" value="ECO:0007669"/>
    <property type="project" value="TreeGrafter"/>
</dbReference>
<dbReference type="GO" id="GO:0071805">
    <property type="term" value="P:potassium ion transmembrane transport"/>
    <property type="evidence" value="ECO:0000250"/>
    <property type="project" value="UniProtKB"/>
</dbReference>
<dbReference type="GO" id="GO:0051260">
    <property type="term" value="P:protein homooligomerization"/>
    <property type="evidence" value="ECO:0007669"/>
    <property type="project" value="InterPro"/>
</dbReference>
<dbReference type="FunFam" id="1.10.287.70:FF:000002">
    <property type="entry name" value="Potassium voltage-gated channel subfamily a member"/>
    <property type="match status" value="1"/>
</dbReference>
<dbReference type="FunFam" id="1.20.120.350:FF:000028">
    <property type="entry name" value="Potassium voltage-gated channel subfamily a member"/>
    <property type="match status" value="1"/>
</dbReference>
<dbReference type="FunFam" id="1.20.5.600:FF:000001">
    <property type="entry name" value="Potassium voltage-gated channel subfamily A member 4"/>
    <property type="match status" value="1"/>
</dbReference>
<dbReference type="FunFam" id="3.30.710.10:FF:000119">
    <property type="entry name" value="potassium voltage-gated channel subfamily A member 4"/>
    <property type="match status" value="1"/>
</dbReference>
<dbReference type="Gene3D" id="1.10.287.70">
    <property type="match status" value="1"/>
</dbReference>
<dbReference type="Gene3D" id="3.30.710.10">
    <property type="entry name" value="Potassium Channel Kv1.1, Chain A"/>
    <property type="match status" value="1"/>
</dbReference>
<dbReference type="Gene3D" id="1.20.5.600">
    <property type="entry name" value="Potassium channel, voltage dependent, Kv1.4, tandem inactivation domain"/>
    <property type="match status" value="1"/>
</dbReference>
<dbReference type="Gene3D" id="1.20.120.350">
    <property type="entry name" value="Voltage-gated potassium channels. Chain C"/>
    <property type="match status" value="1"/>
</dbReference>
<dbReference type="InterPro" id="IPR000210">
    <property type="entry name" value="BTB/POZ_dom"/>
</dbReference>
<dbReference type="InterPro" id="IPR005821">
    <property type="entry name" value="Ion_trans_dom"/>
</dbReference>
<dbReference type="InterPro" id="IPR003968">
    <property type="entry name" value="K_chnl_volt-dep_Kv"/>
</dbReference>
<dbReference type="InterPro" id="IPR003972">
    <property type="entry name" value="K_chnl_volt-dep_Kv1"/>
</dbReference>
<dbReference type="InterPro" id="IPR020467">
    <property type="entry name" value="K_chnl_volt-dep_Kv1.4"/>
</dbReference>
<dbReference type="InterPro" id="IPR012897">
    <property type="entry name" value="K_chnl_volt-dep_Kv1.4_TID"/>
</dbReference>
<dbReference type="InterPro" id="IPR037065">
    <property type="entry name" value="K_chnl_volt-dep_Kv1.4_TID_sf"/>
</dbReference>
<dbReference type="InterPro" id="IPR011333">
    <property type="entry name" value="SKP1/BTB/POZ_sf"/>
</dbReference>
<dbReference type="InterPro" id="IPR003131">
    <property type="entry name" value="T1-type_BTB"/>
</dbReference>
<dbReference type="InterPro" id="IPR028325">
    <property type="entry name" value="VG_K_chnl"/>
</dbReference>
<dbReference type="InterPro" id="IPR027359">
    <property type="entry name" value="Volt_channel_dom_sf"/>
</dbReference>
<dbReference type="PANTHER" id="PTHR11537:SF284">
    <property type="entry name" value="POTASSIUM VOLTAGE-GATED CHANNEL SUBFAMILY A MEMBER 4"/>
    <property type="match status" value="1"/>
</dbReference>
<dbReference type="PANTHER" id="PTHR11537">
    <property type="entry name" value="VOLTAGE-GATED POTASSIUM CHANNEL"/>
    <property type="match status" value="1"/>
</dbReference>
<dbReference type="Pfam" id="PF02214">
    <property type="entry name" value="BTB_2"/>
    <property type="match status" value="1"/>
</dbReference>
<dbReference type="Pfam" id="PF00520">
    <property type="entry name" value="Ion_trans"/>
    <property type="match status" value="1"/>
</dbReference>
<dbReference type="Pfam" id="PF07941">
    <property type="entry name" value="K_channel_TID"/>
    <property type="match status" value="1"/>
</dbReference>
<dbReference type="PRINTS" id="PR00169">
    <property type="entry name" value="KCHANNEL"/>
</dbReference>
<dbReference type="PRINTS" id="PR01511">
    <property type="entry name" value="KV14CHANNEL"/>
</dbReference>
<dbReference type="PRINTS" id="PR01491">
    <property type="entry name" value="KVCHANNEL"/>
</dbReference>
<dbReference type="PRINTS" id="PR01496">
    <property type="entry name" value="SHAKERCHANEL"/>
</dbReference>
<dbReference type="SMART" id="SM00225">
    <property type="entry name" value="BTB"/>
    <property type="match status" value="1"/>
</dbReference>
<dbReference type="SUPFAM" id="SSF54695">
    <property type="entry name" value="POZ domain"/>
    <property type="match status" value="1"/>
</dbReference>
<dbReference type="SUPFAM" id="SSF81324">
    <property type="entry name" value="Voltage-gated potassium channels"/>
    <property type="match status" value="1"/>
</dbReference>
<keyword id="KW-1003">Cell membrane</keyword>
<keyword id="KW-0966">Cell projection</keyword>
<keyword id="KW-0325">Glycoprotein</keyword>
<keyword id="KW-0407">Ion channel</keyword>
<keyword id="KW-0406">Ion transport</keyword>
<keyword id="KW-0472">Membrane</keyword>
<keyword id="KW-0597">Phosphoprotein</keyword>
<keyword id="KW-0630">Potassium</keyword>
<keyword id="KW-0631">Potassium channel</keyword>
<keyword id="KW-0633">Potassium transport</keyword>
<keyword id="KW-1185">Reference proteome</keyword>
<keyword id="KW-0812">Transmembrane</keyword>
<keyword id="KW-1133">Transmembrane helix</keyword>
<keyword id="KW-0813">Transport</keyword>
<keyword id="KW-0851">Voltage-gated channel</keyword>
<evidence type="ECO:0000250" key="1">
    <source>
        <dbReference type="UniProtKB" id="P15385"/>
    </source>
</evidence>
<evidence type="ECO:0000250" key="2">
    <source>
        <dbReference type="UniProtKB" id="P22459"/>
    </source>
</evidence>
<evidence type="ECO:0000250" key="3">
    <source>
        <dbReference type="UniProtKB" id="P63142"/>
    </source>
</evidence>
<evidence type="ECO:0000250" key="4">
    <source>
        <dbReference type="UniProtKB" id="Q61423"/>
    </source>
</evidence>
<evidence type="ECO:0000255" key="5"/>
<evidence type="ECO:0000256" key="6">
    <source>
        <dbReference type="SAM" id="MobiDB-lite"/>
    </source>
</evidence>
<evidence type="ECO:0000269" key="7">
    <source>
    </source>
</evidence>
<evidence type="ECO:0000303" key="8">
    <source>
    </source>
</evidence>
<evidence type="ECO:0000305" key="9"/>
<organism>
    <name type="scientific">Mustela putorius furo</name>
    <name type="common">European domestic ferret</name>
    <name type="synonym">Mustela furo</name>
    <dbReference type="NCBI Taxonomy" id="9669"/>
    <lineage>
        <taxon>Eukaryota</taxon>
        <taxon>Metazoa</taxon>
        <taxon>Chordata</taxon>
        <taxon>Craniata</taxon>
        <taxon>Vertebrata</taxon>
        <taxon>Euteleostomi</taxon>
        <taxon>Mammalia</taxon>
        <taxon>Eutheria</taxon>
        <taxon>Laurasiatheria</taxon>
        <taxon>Carnivora</taxon>
        <taxon>Caniformia</taxon>
        <taxon>Musteloidea</taxon>
        <taxon>Mustelidae</taxon>
        <taxon>Mustelinae</taxon>
        <taxon>Mustela</taxon>
    </lineage>
</organism>
<name>KCNA4_MUSPF</name>
<gene>
    <name type="primary">KCNA4</name>
</gene>
<comment type="function">
    <text evidence="1 7">Voltage-gated potassium channel that mediates transmembrane potassium transport in excitable membranes. Forms tetrameric potassium-selective channels through which potassium ions pass in accordance with their electrochemical gradient. The channel alternates between opened and closed conformations in response to the voltage difference across the membrane (PubMed:7943383). Can form functional homotetrameric channels and heterotetrameric channels that contain variable proportions of KCNA1, KCNA2, KCNA4, KCNA5, and possibly other family members as well; channel properties depend on the type of alpha subunits that are part of the channel (By similarity). Channel properties are modulated by cytoplasmic beta subunits that regulate the subcellular location of the alpha subunits and promote rapid inactivation. In vivo, membranes probably contain a mixture of heteromeric potassium channel complexes, making it difficult to assign currents observed in intact tissues to any particular potassium channel family member. Homotetrameric KCNA4 forms a potassium channel that opens in response to membrane depolarization, followed by rapid spontaneous channel closure (PubMed:7943383). Likewise, a heterotetrameric channel formed by KCNA1 and KCNA4 shows rapid inactivation (By similarity).</text>
</comment>
<comment type="catalytic activity">
    <reaction evidence="7">
        <text>K(+)(in) = K(+)(out)</text>
        <dbReference type="Rhea" id="RHEA:29463"/>
        <dbReference type="ChEBI" id="CHEBI:29103"/>
    </reaction>
</comment>
<comment type="subunit">
    <text evidence="1 2">Homotetramer and heterotetramer of potassium channel proteins (By similarity). Interacts with KCNAB1 and KCNAB2 (By similarity). Interacts with DLG1, DLG2 and DLG4 via their PDZ domains (By similarity). Interacts with SIGMAR1 (By similarity). Detected in a complex with KCNA1 (By similarity). Interacts with KCNA2 (By similarity). Part of a complex containing KCNA1, KCNAB1 and LGI1 (By similarity). Interacts (via cytoplasmic N-terminal domain) with KCNRG (By similarity).</text>
</comment>
<comment type="subcellular location">
    <subcellularLocation>
        <location evidence="7">Cell membrane</location>
        <topology evidence="5">Multi-pass membrane protein</topology>
    </subcellularLocation>
    <subcellularLocation>
        <location evidence="1">Cell projection</location>
        <location evidence="1">Axon</location>
    </subcellularLocation>
</comment>
<comment type="tissue specificity">
    <text>Detectable in brain, atrium, left and right ventricle, and kidney, but not in skeletal muscle, endothelial cells, aorta, and liver.</text>
</comment>
<comment type="domain">
    <text evidence="7">The N-terminus may be important in determining the rate of inactivation of the channel while the tail may play a role in modulation of channel activity and/or targeting of the channel to specific subcellular compartments.</text>
</comment>
<comment type="domain">
    <text evidence="3">The transmembrane segment S4 functions as a voltage-sensor and is characterized by a series of positively charged amino acids at every third position. Channel opening and closing is effected by a conformation change that affects the position and orientation of the voltage-sensor paddle formed by S3 and S4 within the membrane. A transmembrane electric field that is positive inside would push the positively charged S4 segment outwards, thereby opening the pore, while a field that is negative inside would pull the S4 segment inwards and close the pore. Changes in the position and orientation of S4 are then transmitted to the activation gate formed by the inner helix bundle via the S4-S5 linker region.</text>
</comment>
<comment type="similarity">
    <text evidence="9">Belongs to the potassium channel family. A (Shaker) (TC 1.A.1.2) subfamily. Kv1.4/KCNA4 sub-subfamily.</text>
</comment>
<accession>Q28527</accession>
<protein>
    <recommendedName>
        <fullName>Potassium voltage-gated channel subfamily A member 4</fullName>
    </recommendedName>
    <alternativeName>
        <fullName evidence="8">FK1</fullName>
    </alternativeName>
    <alternativeName>
        <fullName>Voltage-gated potassium channel subunit Kv1.4</fullName>
    </alternativeName>
</protein>
<proteinExistence type="evidence at transcript level"/>
<sequence>MEVAMVSAESSGCNSHMPYGYAAQARARERERLAHSRAAAAAAVAAATAAVEGSGGSGGGSHHHHQSRGACTSHDPQGGRGSRRRRRQRPEKKKAHHRQSSFPHCSDLMPSGSEEKILRELSEEEEEEEDEEEEEEEGRFYYSEDDHGDECSYTDLLPQDDGGGGGYSSVRYSDCCERVVINVSGLRFETQMKTLAQFPETLLGDPEKRTQYFDPLRNEYFFDRNRPSFDAILYYYQSGGRLKRPVNVPFDIFTEEVKFYQLGEEALLKFREDEGFVREEEDRALPENEFKKQIWLLFEYPESSSPARGIAIVSVLVILISIVIFCLETLPEFRDDRDLIMALSAGGHSGLLNDTSAPHLENSGHTIFNDPFFIVETVCIVWFSFEFVVRCFACPSQALFFKNIMNIIDIVSILPYFITLGTDLAQQQGGGNGQQQQAMSFAILRIIRLVRVFRIFKLSRHSKGLQILGHTLRASMRELGLLIFFLFIGVILFSSAVYFAEADEPTTHFQSIPDAFWWAVVTMTTVGYGDMKPITVGGKIVGSLCAIAGVLTIALPVPVIVSNFNYFYHRETENEEQTQLTQNAVSCPYLPSNLLKKFRSSTSSSLGDKSEYLEMEEGVKESLCAKEGKCQGKGDDSETDKNNCSNAKAVETDV</sequence>